<protein>
    <recommendedName>
        <fullName>Uncharacterized protein 17</fullName>
    </recommendedName>
</protein>
<name>Y017_SIFVH</name>
<organism>
    <name type="scientific">Sulfolobus islandicus filamentous virus (isolate Iceland/Hveragerdi)</name>
    <name type="common">SIFV</name>
    <dbReference type="NCBI Taxonomy" id="654908"/>
    <lineage>
        <taxon>Viruses</taxon>
        <taxon>Adnaviria</taxon>
        <taxon>Zilligvirae</taxon>
        <taxon>Taleaviricota</taxon>
        <taxon>Tokiviricetes</taxon>
        <taxon>Ligamenvirales</taxon>
        <taxon>Lipothrixviridae</taxon>
        <taxon>Betalipothrixvirus</taxon>
        <taxon>Sulfolobus islandicus filamentous virus</taxon>
    </lineage>
</organism>
<feature type="chain" id="PRO_0000385405" description="Uncharacterized protein 17">
    <location>
        <begin position="1"/>
        <end position="76"/>
    </location>
</feature>
<dbReference type="EMBL" id="AF440571">
    <property type="protein sequence ID" value="AAL27728.1"/>
    <property type="molecule type" value="Genomic_DNA"/>
</dbReference>
<dbReference type="RefSeq" id="NP_445682.1">
    <property type="nucleotide sequence ID" value="NC_003214.2"/>
</dbReference>
<dbReference type="GeneID" id="922308"/>
<dbReference type="KEGG" id="vg:922308"/>
<dbReference type="Proteomes" id="UP000007017">
    <property type="component" value="Segment"/>
</dbReference>
<sequence length="76" mass="8768">MINMGGKTLIINWENPLNRDAYTEIGKLMVLVLPYVVNIEIVDTEGCIMEIDDTIEDEIKELSRFLKYVEVSFAEE</sequence>
<gene>
    <name type="primary">SIFV0017</name>
</gene>
<accession>Q914L3</accession>
<organismHost>
    <name type="scientific">Saccharolobus islandicus</name>
    <name type="common">Sulfolobus islandicus</name>
    <dbReference type="NCBI Taxonomy" id="43080"/>
</organismHost>
<reference key="1">
    <citation type="journal article" date="2000" name="Virology">
        <title>A novel lipothrixvirus, SIFV, of the extremely thermophilic crenarchaeon Sulfolobus.</title>
        <authorList>
            <person name="Arnold H.P."/>
            <person name="Zillig W."/>
            <person name="Ziese U."/>
            <person name="Holz I."/>
            <person name="Crosby M."/>
            <person name="Utterback T."/>
            <person name="Weidmann J.F."/>
            <person name="Umayam L.A."/>
            <person name="Teffera K."/>
            <person name="Kristjanson J.K."/>
            <person name="Klenk H.P."/>
            <person name="Nelson K.E."/>
            <person name="Fraser C.M."/>
        </authorList>
    </citation>
    <scope>NUCLEOTIDE SEQUENCE [GENOMIC DNA]</scope>
</reference>
<keyword id="KW-1185">Reference proteome</keyword>
<proteinExistence type="predicted"/>